<name>CYB_CTEPE</name>
<evidence type="ECO:0000250" key="1"/>
<evidence type="ECO:0000250" key="2">
    <source>
        <dbReference type="UniProtKB" id="P00157"/>
    </source>
</evidence>
<evidence type="ECO:0000255" key="3">
    <source>
        <dbReference type="PROSITE-ProRule" id="PRU00967"/>
    </source>
</evidence>
<evidence type="ECO:0000255" key="4">
    <source>
        <dbReference type="PROSITE-ProRule" id="PRU00968"/>
    </source>
</evidence>
<proteinExistence type="inferred from homology"/>
<organism>
    <name type="scientific">Ctenomys pearsoni</name>
    <name type="common">Pearson's tuco-tuco</name>
    <dbReference type="NCBI Taxonomy" id="88125"/>
    <lineage>
        <taxon>Eukaryota</taxon>
        <taxon>Metazoa</taxon>
        <taxon>Chordata</taxon>
        <taxon>Craniata</taxon>
        <taxon>Vertebrata</taxon>
        <taxon>Euteleostomi</taxon>
        <taxon>Mammalia</taxon>
        <taxon>Eutheria</taxon>
        <taxon>Euarchontoglires</taxon>
        <taxon>Glires</taxon>
        <taxon>Rodentia</taxon>
        <taxon>Hystricomorpha</taxon>
        <taxon>Ctenomyidae</taxon>
        <taxon>Ctenomys</taxon>
    </lineage>
</organism>
<keyword id="KW-0249">Electron transport</keyword>
<keyword id="KW-0349">Heme</keyword>
<keyword id="KW-0408">Iron</keyword>
<keyword id="KW-0472">Membrane</keyword>
<keyword id="KW-0479">Metal-binding</keyword>
<keyword id="KW-0496">Mitochondrion</keyword>
<keyword id="KW-0999">Mitochondrion inner membrane</keyword>
<keyword id="KW-0679">Respiratory chain</keyword>
<keyword id="KW-0812">Transmembrane</keyword>
<keyword id="KW-1133">Transmembrane helix</keyword>
<keyword id="KW-0813">Transport</keyword>
<keyword id="KW-0830">Ubiquinone</keyword>
<geneLocation type="mitochondrion"/>
<feature type="chain" id="PRO_0000060840" description="Cytochrome b">
    <location>
        <begin position="1"/>
        <end position="379"/>
    </location>
</feature>
<feature type="transmembrane region" description="Helical" evidence="2">
    <location>
        <begin position="33"/>
        <end position="53"/>
    </location>
</feature>
<feature type="transmembrane region" description="Helical" evidence="2">
    <location>
        <begin position="77"/>
        <end position="98"/>
    </location>
</feature>
<feature type="transmembrane region" description="Helical" evidence="2">
    <location>
        <begin position="113"/>
        <end position="133"/>
    </location>
</feature>
<feature type="transmembrane region" description="Helical" evidence="2">
    <location>
        <begin position="178"/>
        <end position="198"/>
    </location>
</feature>
<feature type="transmembrane region" description="Helical" evidence="2">
    <location>
        <begin position="226"/>
        <end position="246"/>
    </location>
</feature>
<feature type="transmembrane region" description="Helical" evidence="2">
    <location>
        <begin position="288"/>
        <end position="308"/>
    </location>
</feature>
<feature type="transmembrane region" description="Helical" evidence="2">
    <location>
        <begin position="320"/>
        <end position="340"/>
    </location>
</feature>
<feature type="transmembrane region" description="Helical" evidence="2">
    <location>
        <begin position="347"/>
        <end position="367"/>
    </location>
</feature>
<feature type="binding site" description="axial binding residue" evidence="2">
    <location>
        <position position="83"/>
    </location>
    <ligand>
        <name>heme b</name>
        <dbReference type="ChEBI" id="CHEBI:60344"/>
        <label>b562</label>
    </ligand>
    <ligandPart>
        <name>Fe</name>
        <dbReference type="ChEBI" id="CHEBI:18248"/>
    </ligandPart>
</feature>
<feature type="binding site" description="axial binding residue" evidence="2">
    <location>
        <position position="97"/>
    </location>
    <ligand>
        <name>heme b</name>
        <dbReference type="ChEBI" id="CHEBI:60344"/>
        <label>b566</label>
    </ligand>
    <ligandPart>
        <name>Fe</name>
        <dbReference type="ChEBI" id="CHEBI:18248"/>
    </ligandPart>
</feature>
<feature type="binding site" description="axial binding residue" evidence="2">
    <location>
        <position position="182"/>
    </location>
    <ligand>
        <name>heme b</name>
        <dbReference type="ChEBI" id="CHEBI:60344"/>
        <label>b562</label>
    </ligand>
    <ligandPart>
        <name>Fe</name>
        <dbReference type="ChEBI" id="CHEBI:18248"/>
    </ligandPart>
</feature>
<feature type="binding site" description="axial binding residue" evidence="2">
    <location>
        <position position="196"/>
    </location>
    <ligand>
        <name>heme b</name>
        <dbReference type="ChEBI" id="CHEBI:60344"/>
        <label>b566</label>
    </ligand>
    <ligandPart>
        <name>Fe</name>
        <dbReference type="ChEBI" id="CHEBI:18248"/>
    </ligandPart>
</feature>
<feature type="binding site" evidence="2">
    <location>
        <position position="201"/>
    </location>
    <ligand>
        <name>a ubiquinone</name>
        <dbReference type="ChEBI" id="CHEBI:16389"/>
    </ligand>
</feature>
<reference key="1">
    <citation type="journal article" date="1999" name="J. Mammal. Evol.">
        <title>Molecular phylogeny of Tuco-tucos, genus Ctenomys (Rodentia: Octodontidae): evaluation of the mendocinus species group and the evolution of asymmetric sperm.</title>
        <authorList>
            <person name="D'Elia G."/>
            <person name="Lessa E.P."/>
            <person name="Cook J.A."/>
        </authorList>
    </citation>
    <scope>NUCLEOTIDE SEQUENCE [GENOMIC DNA]</scope>
    <source>
        <strain>Isolate CA 722</strain>
    </source>
</reference>
<sequence length="379" mass="42997">MTNTRKSHPLIKIVNHSFIDLPTPSNISAWWNFGSLLGVCLGLQILTGLFLAMHYTADTTTAFSSVTHICRDVNYGWLIRYMHANGASMFFIFLYFHIGRGIYYGSYTFMDTWNIGVLLLFATMATAFMGYVLPWGQMSFWGATVITNLLSAIPYIGPTLVEWIWGGFSVDKATLIRFFAFHFILPFIITAMVMIHLLFLHETGSNNPSGMNSDSDKIPFHPYYTIKDILGILFMMITLMSLVMFTPDLLGDPDNYTPANPLNTPPHIKPEWYFLFAYAILRSIPNKLGGVLALVFSILILMLFPILHSSKQRSMSFRPLSQCLMWMLVANLLILTWIGGQPVEHPFTTIGQLASTTYFFTILILMPSTALMENKLLKW</sequence>
<comment type="function">
    <text evidence="2">Component of the ubiquinol-cytochrome c reductase complex (complex III or cytochrome b-c1 complex) that is part of the mitochondrial respiratory chain. The b-c1 complex mediates electron transfer from ubiquinol to cytochrome c. Contributes to the generation of a proton gradient across the mitochondrial membrane that is then used for ATP synthesis.</text>
</comment>
<comment type="cofactor">
    <cofactor evidence="2">
        <name>heme b</name>
        <dbReference type="ChEBI" id="CHEBI:60344"/>
    </cofactor>
    <text evidence="2">Binds 2 heme b groups non-covalently.</text>
</comment>
<comment type="subunit">
    <text evidence="2">The cytochrome bc1 complex contains 11 subunits: 3 respiratory subunits (MT-CYB, CYC1 and UQCRFS1), 2 core proteins (UQCRC1 and UQCRC2) and 6 low-molecular weight proteins (UQCRH/QCR6, UQCRB/QCR7, UQCRQ/QCR8, UQCR10/QCR9, UQCR11/QCR10 and a cleavage product of UQCRFS1). This cytochrome bc1 complex then forms a dimer.</text>
</comment>
<comment type="subcellular location">
    <subcellularLocation>
        <location evidence="2">Mitochondrion inner membrane</location>
        <topology evidence="2">Multi-pass membrane protein</topology>
    </subcellularLocation>
</comment>
<comment type="miscellaneous">
    <text evidence="1">Heme 1 (or BL or b562) is low-potential and absorbs at about 562 nm, and heme 2 (or BH or b566) is high-potential and absorbs at about 566 nm.</text>
</comment>
<comment type="similarity">
    <text evidence="3 4">Belongs to the cytochrome b family.</text>
</comment>
<comment type="caution">
    <text evidence="2">The full-length protein contains only eight transmembrane helices, not nine as predicted by bioinformatics tools.</text>
</comment>
<gene>
    <name type="primary">MT-CYB</name>
    <name type="synonym">COB</name>
    <name type="synonym">CYTB</name>
    <name type="synonym">MTCYB</name>
</gene>
<dbReference type="EMBL" id="AF119108">
    <property type="protein sequence ID" value="AAD17282.1"/>
    <property type="molecule type" value="Genomic_DNA"/>
</dbReference>
<dbReference type="SMR" id="Q9ZY14"/>
<dbReference type="GO" id="GO:0005743">
    <property type="term" value="C:mitochondrial inner membrane"/>
    <property type="evidence" value="ECO:0007669"/>
    <property type="project" value="UniProtKB-SubCell"/>
</dbReference>
<dbReference type="GO" id="GO:0045275">
    <property type="term" value="C:respiratory chain complex III"/>
    <property type="evidence" value="ECO:0007669"/>
    <property type="project" value="InterPro"/>
</dbReference>
<dbReference type="GO" id="GO:0046872">
    <property type="term" value="F:metal ion binding"/>
    <property type="evidence" value="ECO:0007669"/>
    <property type="project" value="UniProtKB-KW"/>
</dbReference>
<dbReference type="GO" id="GO:0008121">
    <property type="term" value="F:ubiquinol-cytochrome-c reductase activity"/>
    <property type="evidence" value="ECO:0007669"/>
    <property type="project" value="InterPro"/>
</dbReference>
<dbReference type="GO" id="GO:0006122">
    <property type="term" value="P:mitochondrial electron transport, ubiquinol to cytochrome c"/>
    <property type="evidence" value="ECO:0007669"/>
    <property type="project" value="TreeGrafter"/>
</dbReference>
<dbReference type="CDD" id="cd00290">
    <property type="entry name" value="cytochrome_b_C"/>
    <property type="match status" value="1"/>
</dbReference>
<dbReference type="CDD" id="cd00284">
    <property type="entry name" value="Cytochrome_b_N"/>
    <property type="match status" value="1"/>
</dbReference>
<dbReference type="FunFam" id="1.20.810.10:FF:000002">
    <property type="entry name" value="Cytochrome b"/>
    <property type="match status" value="1"/>
</dbReference>
<dbReference type="Gene3D" id="1.20.810.10">
    <property type="entry name" value="Cytochrome Bc1 Complex, Chain C"/>
    <property type="match status" value="1"/>
</dbReference>
<dbReference type="InterPro" id="IPR005798">
    <property type="entry name" value="Cyt_b/b6_C"/>
</dbReference>
<dbReference type="InterPro" id="IPR036150">
    <property type="entry name" value="Cyt_b/b6_C_sf"/>
</dbReference>
<dbReference type="InterPro" id="IPR005797">
    <property type="entry name" value="Cyt_b/b6_N"/>
</dbReference>
<dbReference type="InterPro" id="IPR027387">
    <property type="entry name" value="Cytb/b6-like_sf"/>
</dbReference>
<dbReference type="InterPro" id="IPR030689">
    <property type="entry name" value="Cytochrome_b"/>
</dbReference>
<dbReference type="InterPro" id="IPR048260">
    <property type="entry name" value="Cytochrome_b_C_euk/bac"/>
</dbReference>
<dbReference type="InterPro" id="IPR048259">
    <property type="entry name" value="Cytochrome_b_N_euk/bac"/>
</dbReference>
<dbReference type="InterPro" id="IPR016174">
    <property type="entry name" value="Di-haem_cyt_TM"/>
</dbReference>
<dbReference type="PANTHER" id="PTHR19271">
    <property type="entry name" value="CYTOCHROME B"/>
    <property type="match status" value="1"/>
</dbReference>
<dbReference type="PANTHER" id="PTHR19271:SF16">
    <property type="entry name" value="CYTOCHROME B"/>
    <property type="match status" value="1"/>
</dbReference>
<dbReference type="Pfam" id="PF00032">
    <property type="entry name" value="Cytochrom_B_C"/>
    <property type="match status" value="1"/>
</dbReference>
<dbReference type="Pfam" id="PF00033">
    <property type="entry name" value="Cytochrome_B"/>
    <property type="match status" value="1"/>
</dbReference>
<dbReference type="PIRSF" id="PIRSF038885">
    <property type="entry name" value="COB"/>
    <property type="match status" value="1"/>
</dbReference>
<dbReference type="SUPFAM" id="SSF81648">
    <property type="entry name" value="a domain/subunit of cytochrome bc1 complex (Ubiquinol-cytochrome c reductase)"/>
    <property type="match status" value="1"/>
</dbReference>
<dbReference type="SUPFAM" id="SSF81342">
    <property type="entry name" value="Transmembrane di-heme cytochromes"/>
    <property type="match status" value="1"/>
</dbReference>
<dbReference type="PROSITE" id="PS51003">
    <property type="entry name" value="CYTB_CTER"/>
    <property type="match status" value="1"/>
</dbReference>
<dbReference type="PROSITE" id="PS51002">
    <property type="entry name" value="CYTB_NTER"/>
    <property type="match status" value="1"/>
</dbReference>
<protein>
    <recommendedName>
        <fullName>Cytochrome b</fullName>
    </recommendedName>
    <alternativeName>
        <fullName>Complex III subunit 3</fullName>
    </alternativeName>
    <alternativeName>
        <fullName>Complex III subunit III</fullName>
    </alternativeName>
    <alternativeName>
        <fullName>Cytochrome b-c1 complex subunit 3</fullName>
    </alternativeName>
    <alternativeName>
        <fullName>Ubiquinol-cytochrome-c reductase complex cytochrome b subunit</fullName>
    </alternativeName>
</protein>
<accession>Q9ZY14</accession>